<comment type="function">
    <text evidence="1">Catalyzes the transfer of a phosphate group to glutamate to form L-glutamate 5-phosphate.</text>
</comment>
<comment type="catalytic activity">
    <reaction evidence="1">
        <text>L-glutamate + ATP = L-glutamyl 5-phosphate + ADP</text>
        <dbReference type="Rhea" id="RHEA:14877"/>
        <dbReference type="ChEBI" id="CHEBI:29985"/>
        <dbReference type="ChEBI" id="CHEBI:30616"/>
        <dbReference type="ChEBI" id="CHEBI:58274"/>
        <dbReference type="ChEBI" id="CHEBI:456216"/>
        <dbReference type="EC" id="2.7.2.11"/>
    </reaction>
</comment>
<comment type="pathway">
    <text evidence="1">Amino-acid biosynthesis; L-proline biosynthesis; L-glutamate 5-semialdehyde from L-glutamate: step 1/2.</text>
</comment>
<comment type="subcellular location">
    <subcellularLocation>
        <location evidence="1">Cytoplasm</location>
    </subcellularLocation>
</comment>
<comment type="similarity">
    <text evidence="1">Belongs to the glutamate 5-kinase family.</text>
</comment>
<accession>P74936</accession>
<feature type="chain" id="PRO_0000109750" description="Glutamate 5-kinase">
    <location>
        <begin position="1"/>
        <end position="296"/>
    </location>
</feature>
<feature type="binding site" evidence="1">
    <location>
        <position position="15"/>
    </location>
    <ligand>
        <name>ATP</name>
        <dbReference type="ChEBI" id="CHEBI:30616"/>
    </ligand>
</feature>
<feature type="binding site" evidence="1">
    <location>
        <position position="55"/>
    </location>
    <ligand>
        <name>substrate</name>
    </ligand>
</feature>
<feature type="binding site" evidence="1">
    <location>
        <position position="159"/>
    </location>
    <ligand>
        <name>substrate</name>
    </ligand>
</feature>
<feature type="binding site" evidence="1">
    <location>
        <position position="186"/>
    </location>
    <ligand>
        <name>substrate</name>
    </ligand>
</feature>
<feature type="binding site" evidence="1">
    <location>
        <begin position="206"/>
        <end position="207"/>
    </location>
    <ligand>
        <name>ATP</name>
        <dbReference type="ChEBI" id="CHEBI:30616"/>
    </ligand>
</feature>
<feature type="binding site" evidence="1">
    <location>
        <begin position="248"/>
        <end position="254"/>
    </location>
    <ligand>
        <name>ATP</name>
        <dbReference type="ChEBI" id="CHEBI:30616"/>
    </ligand>
</feature>
<name>PROB_TREPA</name>
<gene>
    <name evidence="1" type="primary">proB</name>
    <name type="ordered locus">TP_0351</name>
</gene>
<evidence type="ECO:0000255" key="1">
    <source>
        <dbReference type="HAMAP-Rule" id="MF_00456"/>
    </source>
</evidence>
<reference key="1">
    <citation type="journal article" date="1997" name="DNA Seq.">
        <title>Nucleotide sequences of the proA and proB genes of Treponema pallidum, the syphilis agent.</title>
        <authorList>
            <person name="Stamm L.V."/>
            <person name="Barnes N.Y."/>
        </authorList>
    </citation>
    <scope>NUCLEOTIDE SEQUENCE [GENOMIC DNA]</scope>
    <source>
        <strain>Nichols</strain>
    </source>
</reference>
<reference key="2">
    <citation type="journal article" date="1998" name="Science">
        <title>Complete genome sequence of Treponema pallidum, the syphilis spirochete.</title>
        <authorList>
            <person name="Fraser C.M."/>
            <person name="Norris S.J."/>
            <person name="Weinstock G.M."/>
            <person name="White O."/>
            <person name="Sutton G.G."/>
            <person name="Dodson R.J."/>
            <person name="Gwinn M.L."/>
            <person name="Hickey E.K."/>
            <person name="Clayton R.A."/>
            <person name="Ketchum K.A."/>
            <person name="Sodergren E."/>
            <person name="Hardham J.M."/>
            <person name="McLeod M.P."/>
            <person name="Salzberg S.L."/>
            <person name="Peterson J.D."/>
            <person name="Khalak H.G."/>
            <person name="Richardson D.L."/>
            <person name="Howell J.K."/>
            <person name="Chidambaram M."/>
            <person name="Utterback T.R."/>
            <person name="McDonald L.A."/>
            <person name="Artiach P."/>
            <person name="Bowman C."/>
            <person name="Cotton M.D."/>
            <person name="Fujii C."/>
            <person name="Garland S.A."/>
            <person name="Hatch B."/>
            <person name="Horst K."/>
            <person name="Roberts K.M."/>
            <person name="Sandusky M."/>
            <person name="Weidman J.F."/>
            <person name="Smith H.O."/>
            <person name="Venter J.C."/>
        </authorList>
    </citation>
    <scope>NUCLEOTIDE SEQUENCE [LARGE SCALE GENOMIC DNA]</scope>
    <source>
        <strain>Nichols</strain>
    </source>
</reference>
<proteinExistence type="inferred from homology"/>
<sequence>MIRALFAAAKKIVIKIGSNTLAQADGTPDEEFLAECARACAALMRDGKQIVVVSSGAQVAGISALHCLSSPPQGAGLERHESRGVIPGDGASCKQALCAVGQAELISRWRSAFAAHQQCVGQFLCTKEDFTDSDRAAQVRYTLSFLLERRVVPILNENDALCCSDVPSVPADRRVSLSPQKRIGDNDSLSAFVALLWQADLLLLLSDIDGVYDKDPKAHTDAQHVPLVTDVSALVGKTSMGSSNVFGTGGIATKLDAARLVTRAGIPLVLANGRHLDPILSLMRGDARGTLFVPVS</sequence>
<keyword id="KW-0028">Amino-acid biosynthesis</keyword>
<keyword id="KW-0067">ATP-binding</keyword>
<keyword id="KW-0963">Cytoplasm</keyword>
<keyword id="KW-0418">Kinase</keyword>
<keyword id="KW-0547">Nucleotide-binding</keyword>
<keyword id="KW-0641">Proline biosynthesis</keyword>
<keyword id="KW-1185">Reference proteome</keyword>
<keyword id="KW-0808">Transferase</keyword>
<protein>
    <recommendedName>
        <fullName evidence="1">Glutamate 5-kinase</fullName>
        <ecNumber evidence="1">2.7.2.11</ecNumber>
    </recommendedName>
    <alternativeName>
        <fullName evidence="1">Gamma-glutamyl kinase</fullName>
        <shortName evidence="1">GK</shortName>
    </alternativeName>
</protein>
<dbReference type="EC" id="2.7.2.11" evidence="1"/>
<dbReference type="EMBL" id="U61535">
    <property type="protein sequence ID" value="AAB39981.1"/>
    <property type="molecule type" value="Genomic_DNA"/>
</dbReference>
<dbReference type="EMBL" id="AE000520">
    <property type="protein sequence ID" value="AAC65336.1"/>
    <property type="molecule type" value="Genomic_DNA"/>
</dbReference>
<dbReference type="PIR" id="F71336">
    <property type="entry name" value="F71336"/>
</dbReference>
<dbReference type="RefSeq" id="WP_010881799.1">
    <property type="nucleotide sequence ID" value="NC_021490.2"/>
</dbReference>
<dbReference type="SMR" id="P74936"/>
<dbReference type="IntAct" id="P74936">
    <property type="interactions" value="5"/>
</dbReference>
<dbReference type="STRING" id="243276.TP_0351"/>
<dbReference type="EnsemblBacteria" id="AAC65336">
    <property type="protein sequence ID" value="AAC65336"/>
    <property type="gene ID" value="TP_0351"/>
</dbReference>
<dbReference type="GeneID" id="93876130"/>
<dbReference type="KEGG" id="tpa:TP_0351"/>
<dbReference type="KEGG" id="tpw:TPANIC_0351"/>
<dbReference type="eggNOG" id="COG0263">
    <property type="taxonomic scope" value="Bacteria"/>
</dbReference>
<dbReference type="HOGENOM" id="CLU_025400_0_2_12"/>
<dbReference type="OrthoDB" id="9804434at2"/>
<dbReference type="UniPathway" id="UPA00098">
    <property type="reaction ID" value="UER00359"/>
</dbReference>
<dbReference type="Proteomes" id="UP000000811">
    <property type="component" value="Chromosome"/>
</dbReference>
<dbReference type="GO" id="GO:0005829">
    <property type="term" value="C:cytosol"/>
    <property type="evidence" value="ECO:0007669"/>
    <property type="project" value="TreeGrafter"/>
</dbReference>
<dbReference type="GO" id="GO:0005524">
    <property type="term" value="F:ATP binding"/>
    <property type="evidence" value="ECO:0007669"/>
    <property type="project" value="UniProtKB-KW"/>
</dbReference>
<dbReference type="GO" id="GO:0004349">
    <property type="term" value="F:glutamate 5-kinase activity"/>
    <property type="evidence" value="ECO:0007669"/>
    <property type="project" value="UniProtKB-UniRule"/>
</dbReference>
<dbReference type="GO" id="GO:0055129">
    <property type="term" value="P:L-proline biosynthetic process"/>
    <property type="evidence" value="ECO:0007669"/>
    <property type="project" value="UniProtKB-UniRule"/>
</dbReference>
<dbReference type="CDD" id="cd04242">
    <property type="entry name" value="AAK_G5K_ProB"/>
    <property type="match status" value="1"/>
</dbReference>
<dbReference type="FunFam" id="3.40.1160.10:FF:000006">
    <property type="entry name" value="Glutamate 5-kinase"/>
    <property type="match status" value="1"/>
</dbReference>
<dbReference type="Gene3D" id="3.40.1160.10">
    <property type="entry name" value="Acetylglutamate kinase-like"/>
    <property type="match status" value="1"/>
</dbReference>
<dbReference type="HAMAP" id="MF_00456">
    <property type="entry name" value="ProB"/>
    <property type="match status" value="1"/>
</dbReference>
<dbReference type="InterPro" id="IPR036393">
    <property type="entry name" value="AceGlu_kinase-like_sf"/>
</dbReference>
<dbReference type="InterPro" id="IPR001048">
    <property type="entry name" value="Asp/Glu/Uridylate_kinase"/>
</dbReference>
<dbReference type="InterPro" id="IPR041739">
    <property type="entry name" value="G5K_ProB"/>
</dbReference>
<dbReference type="InterPro" id="IPR001057">
    <property type="entry name" value="Glu/AcGlu_kinase"/>
</dbReference>
<dbReference type="InterPro" id="IPR011529">
    <property type="entry name" value="Glu_5kinase"/>
</dbReference>
<dbReference type="InterPro" id="IPR005715">
    <property type="entry name" value="Glu_5kinase/COase_Synthase"/>
</dbReference>
<dbReference type="InterPro" id="IPR019797">
    <property type="entry name" value="Glutamate_5-kinase_CS"/>
</dbReference>
<dbReference type="NCBIfam" id="TIGR01027">
    <property type="entry name" value="proB"/>
    <property type="match status" value="1"/>
</dbReference>
<dbReference type="PANTHER" id="PTHR43654">
    <property type="entry name" value="GLUTAMATE 5-KINASE"/>
    <property type="match status" value="1"/>
</dbReference>
<dbReference type="PANTHER" id="PTHR43654:SF1">
    <property type="entry name" value="ISOPENTENYL PHOSPHATE KINASE"/>
    <property type="match status" value="1"/>
</dbReference>
<dbReference type="Pfam" id="PF00696">
    <property type="entry name" value="AA_kinase"/>
    <property type="match status" value="1"/>
</dbReference>
<dbReference type="PIRSF" id="PIRSF000729">
    <property type="entry name" value="GK"/>
    <property type="match status" value="1"/>
</dbReference>
<dbReference type="PRINTS" id="PR00474">
    <property type="entry name" value="GLU5KINASE"/>
</dbReference>
<dbReference type="SUPFAM" id="SSF53633">
    <property type="entry name" value="Carbamate kinase-like"/>
    <property type="match status" value="1"/>
</dbReference>
<dbReference type="PROSITE" id="PS00902">
    <property type="entry name" value="GLUTAMATE_5_KINASE"/>
    <property type="match status" value="1"/>
</dbReference>
<organism>
    <name type="scientific">Treponema pallidum (strain Nichols)</name>
    <dbReference type="NCBI Taxonomy" id="243276"/>
    <lineage>
        <taxon>Bacteria</taxon>
        <taxon>Pseudomonadati</taxon>
        <taxon>Spirochaetota</taxon>
        <taxon>Spirochaetia</taxon>
        <taxon>Spirochaetales</taxon>
        <taxon>Treponemataceae</taxon>
        <taxon>Treponema</taxon>
    </lineage>
</organism>